<protein>
    <recommendedName>
        <fullName evidence="6">Beta-amyrin synthase</fullName>
        <shortName evidence="6">AtBAS</shortName>
        <ecNumber evidence="2">5.4.99.39</ecNumber>
    </recommendedName>
    <alternativeName>
        <fullName evidence="5">Lupeol synthase 4</fullName>
        <shortName evidence="5">AtLUP4</shortName>
    </alternativeName>
</protein>
<comment type="function">
    <text evidence="3">Converts oxidosqualene to beta-amyrin.</text>
</comment>
<comment type="catalytic activity">
    <reaction evidence="2">
        <text>(S)-2,3-epoxysqualene = beta-amyrin</text>
        <dbReference type="Rhea" id="RHEA:31007"/>
        <dbReference type="ChEBI" id="CHEBI:10352"/>
        <dbReference type="ChEBI" id="CHEBI:15441"/>
        <dbReference type="EC" id="5.4.99.39"/>
    </reaction>
</comment>
<comment type="biotechnology">
    <text evidence="4">Saccharomyces cerevisiae expressing Glycyrrhiza uralensis CYP88D6 and CYP72A154, combined with the expression of Arabidopsis thaliana beta-amyrin synthase (beta-AS) and NADPH-cytochrome P450 reductase 1 (ATR1), accumulates glycyrrhetinic acid (GA) and, to lower levels, beta-amyrin; these GA production was increased in the presence of G.uralensis cytochrome b5 (CYB5).</text>
</comment>
<comment type="similarity">
    <text evidence="7">Belongs to the terpene cyclase/mutase family.</text>
</comment>
<comment type="sequence caution" evidence="7">
    <conflict type="erroneous gene model prediction">
        <sequence resource="EMBL-CDS" id="AAC17080"/>
    </conflict>
    <text>The predicted gene At1g78950 has been split into 2 genes: At1g78950 and At1g78955.</text>
</comment>
<dbReference type="EC" id="5.4.99.39" evidence="2"/>
<dbReference type="EMBL" id="AB374428">
    <property type="protein sequence ID" value="BAG82628.1"/>
    <property type="molecule type" value="mRNA"/>
</dbReference>
<dbReference type="EMBL" id="AC002986">
    <property type="protein sequence ID" value="AAC17080.1"/>
    <property type="status" value="ALT_SEQ"/>
    <property type="molecule type" value="Genomic_DNA"/>
</dbReference>
<dbReference type="EMBL" id="CP002684">
    <property type="protein sequence ID" value="AEE36183.1"/>
    <property type="molecule type" value="Genomic_DNA"/>
</dbReference>
<dbReference type="PIR" id="T01060">
    <property type="entry name" value="T01060"/>
</dbReference>
<dbReference type="RefSeq" id="NP_178016.2">
    <property type="nucleotide sequence ID" value="NM_106544.5"/>
</dbReference>
<dbReference type="SMR" id="B6EXY6"/>
<dbReference type="FunCoup" id="B6EXY6">
    <property type="interactions" value="793"/>
</dbReference>
<dbReference type="STRING" id="3702.B6EXY6"/>
<dbReference type="PaxDb" id="3702-AT1G78950.1"/>
<dbReference type="ProteomicsDB" id="238809"/>
<dbReference type="EnsemblPlants" id="AT1G78950.1">
    <property type="protein sequence ID" value="AT1G78950.1"/>
    <property type="gene ID" value="AT1G78950"/>
</dbReference>
<dbReference type="GeneID" id="844234"/>
<dbReference type="Gramene" id="AT1G78950.1">
    <property type="protein sequence ID" value="AT1G78950.1"/>
    <property type="gene ID" value="AT1G78950"/>
</dbReference>
<dbReference type="KEGG" id="ath:AT1G78950"/>
<dbReference type="Araport" id="AT1G78950"/>
<dbReference type="TAIR" id="AT1G78950">
    <property type="gene designation" value="BAS"/>
</dbReference>
<dbReference type="eggNOG" id="KOG0497">
    <property type="taxonomic scope" value="Eukaryota"/>
</dbReference>
<dbReference type="HOGENOM" id="CLU_009074_2_0_1"/>
<dbReference type="InParanoid" id="B6EXY6"/>
<dbReference type="OMA" id="YINCEAM"/>
<dbReference type="OrthoDB" id="21502at2759"/>
<dbReference type="PhylomeDB" id="B6EXY6"/>
<dbReference type="BRENDA" id="5.4.99.39">
    <property type="organism ID" value="399"/>
</dbReference>
<dbReference type="PRO" id="PR:B6EXY6"/>
<dbReference type="Proteomes" id="UP000006548">
    <property type="component" value="Chromosome 1"/>
</dbReference>
<dbReference type="ExpressionAtlas" id="B6EXY6">
    <property type="expression patterns" value="baseline and differential"/>
</dbReference>
<dbReference type="GO" id="GO:0005811">
    <property type="term" value="C:lipid droplet"/>
    <property type="evidence" value="ECO:0007669"/>
    <property type="project" value="InterPro"/>
</dbReference>
<dbReference type="GO" id="GO:0042300">
    <property type="term" value="F:beta-amyrin synthase activity"/>
    <property type="evidence" value="ECO:0000314"/>
    <property type="project" value="TAIR"/>
</dbReference>
<dbReference type="GO" id="GO:0016104">
    <property type="term" value="P:triterpenoid biosynthetic process"/>
    <property type="evidence" value="ECO:0007669"/>
    <property type="project" value="InterPro"/>
</dbReference>
<dbReference type="CDD" id="cd02892">
    <property type="entry name" value="SQCY_1"/>
    <property type="match status" value="1"/>
</dbReference>
<dbReference type="FunFam" id="1.50.10.20:FF:000011">
    <property type="entry name" value="Terpene cyclase/mutase family member"/>
    <property type="match status" value="1"/>
</dbReference>
<dbReference type="FunFam" id="1.50.10.20:FF:000064">
    <property type="entry name" value="Uncharacterized protein"/>
    <property type="match status" value="1"/>
</dbReference>
<dbReference type="Gene3D" id="1.50.10.20">
    <property type="match status" value="2"/>
</dbReference>
<dbReference type="InterPro" id="IPR032696">
    <property type="entry name" value="SQ_cyclase_C"/>
</dbReference>
<dbReference type="InterPro" id="IPR032697">
    <property type="entry name" value="SQ_cyclase_N"/>
</dbReference>
<dbReference type="InterPro" id="IPR018333">
    <property type="entry name" value="Squalene_cyclase"/>
</dbReference>
<dbReference type="InterPro" id="IPR002365">
    <property type="entry name" value="Terpene_synthase_CS"/>
</dbReference>
<dbReference type="InterPro" id="IPR008930">
    <property type="entry name" value="Terpenoid_cyclase/PrenylTrfase"/>
</dbReference>
<dbReference type="NCBIfam" id="TIGR01787">
    <property type="entry name" value="squalene_cyclas"/>
    <property type="match status" value="1"/>
</dbReference>
<dbReference type="PANTHER" id="PTHR11764:SF58">
    <property type="entry name" value="BETA-AMYRIN SYNTHASE-RELATED"/>
    <property type="match status" value="1"/>
</dbReference>
<dbReference type="PANTHER" id="PTHR11764">
    <property type="entry name" value="TERPENE CYCLASE/MUTASE FAMILY MEMBER"/>
    <property type="match status" value="1"/>
</dbReference>
<dbReference type="Pfam" id="PF13243">
    <property type="entry name" value="SQHop_cyclase_C"/>
    <property type="match status" value="1"/>
</dbReference>
<dbReference type="Pfam" id="PF13249">
    <property type="entry name" value="SQHop_cyclase_N"/>
    <property type="match status" value="1"/>
</dbReference>
<dbReference type="SFLD" id="SFLDG01016">
    <property type="entry name" value="Prenyltransferase_Like_2"/>
    <property type="match status" value="1"/>
</dbReference>
<dbReference type="SUPFAM" id="SSF48239">
    <property type="entry name" value="Terpenoid cyclases/Protein prenyltransferases"/>
    <property type="match status" value="2"/>
</dbReference>
<dbReference type="PROSITE" id="PS01074">
    <property type="entry name" value="TERPENE_SYNTHASES"/>
    <property type="match status" value="1"/>
</dbReference>
<accession>B6EXY6</accession>
<accession>O64553</accession>
<accession>Q3ECA8</accession>
<organism>
    <name type="scientific">Arabidopsis thaliana</name>
    <name type="common">Mouse-ear cress</name>
    <dbReference type="NCBI Taxonomy" id="3702"/>
    <lineage>
        <taxon>Eukaryota</taxon>
        <taxon>Viridiplantae</taxon>
        <taxon>Streptophyta</taxon>
        <taxon>Embryophyta</taxon>
        <taxon>Tracheophyta</taxon>
        <taxon>Spermatophyta</taxon>
        <taxon>Magnoliopsida</taxon>
        <taxon>eudicotyledons</taxon>
        <taxon>Gunneridae</taxon>
        <taxon>Pentapetalae</taxon>
        <taxon>rosids</taxon>
        <taxon>malvids</taxon>
        <taxon>Brassicales</taxon>
        <taxon>Brassicaceae</taxon>
        <taxon>Camelineae</taxon>
        <taxon>Arabidopsis</taxon>
    </lineage>
</organism>
<proteinExistence type="evidence at protein level"/>
<feature type="chain" id="PRO_0000366134" description="Beta-amyrin synthase">
    <location>
        <begin position="1"/>
        <end position="759"/>
    </location>
</feature>
<feature type="repeat" description="PFTB 1">
    <location>
        <begin position="149"/>
        <end position="190"/>
    </location>
</feature>
<feature type="repeat" description="PFTB 2">
    <location>
        <begin position="592"/>
        <end position="632"/>
    </location>
</feature>
<feature type="repeat" description="PFTB 3">
    <location>
        <begin position="641"/>
        <end position="682"/>
    </location>
</feature>
<feature type="active site" description="Proton donor" evidence="1">
    <location>
        <position position="486"/>
    </location>
</feature>
<feature type="sequence conflict" description="In Ref. 1; BAG82628." evidence="7" ref="1">
    <original>P</original>
    <variation>L</variation>
    <location>
        <position position="334"/>
    </location>
</feature>
<feature type="sequence conflict" description="In Ref. 1; BAG82628." evidence="7" ref="1">
    <original>L</original>
    <variation>S</variation>
    <location>
        <position position="544"/>
    </location>
</feature>
<evidence type="ECO:0000250" key="1">
    <source>
        <dbReference type="UniProtKB" id="P48449"/>
    </source>
</evidence>
<evidence type="ECO:0000269" key="2">
    <source>
    </source>
</evidence>
<evidence type="ECO:0000269" key="3">
    <source>
    </source>
</evidence>
<evidence type="ECO:0000269" key="4">
    <source>
    </source>
</evidence>
<evidence type="ECO:0000303" key="5">
    <source>
    </source>
</evidence>
<evidence type="ECO:0000303" key="6">
    <source>
    </source>
</evidence>
<evidence type="ECO:0000305" key="7"/>
<evidence type="ECO:0000312" key="8">
    <source>
        <dbReference type="Araport" id="AT1G78950"/>
    </source>
</evidence>
<evidence type="ECO:0000312" key="9">
    <source>
        <dbReference type="EMBL" id="AAC17080.1"/>
    </source>
</evidence>
<sequence>MWRLKIGEGNGDDPYLFTTNNFAGRQTWEFDPDGGSPEERHSVVEARRIFYDNRFHVKASSDLLWRMQFLREKKFEQRIAPVKVEDSEKVTFETATSALRRGIHFFSALQASDGHWPAENAGPLFFLPPLVFCLYITGHLDEVFTSEHRKEILRYIYCHQKEDGGWGLHIEGHSTMFCTTLNYICMRILGESPDGGHDNACGRAREWILSHGGVTYIPSWGKTWLSILGVFDWSGSNPMPPEFWILPSFFPVHPAKMWSYCRMVYLPMSYLYGKRFVGPITSLILQLRKELYLQPYEEINWMKVRHLCAKEDTYYPRPLVQELVWDSLYIFAEPFLARWPFNKLLREKALQLAMKHIHYEDENSRYITIGCVEKVLCMLACWVEDPNGDYFKKHLSRISDYLWMAEDGMKMQSFGSQLWDTGFAMQALLASNLSSEISDVLRRGHEFIKNSQVGENPSGDYKSMYRHISKGAWTFSDRDHGWQVSDCTAHGLKCCLLFSMLAPDIVGPKQDPERLHDSVNILLSLQSKNGGMTAWEPAGAPKWLELLNPTEMFSDIVIEHEYSECTSSAIQALSLFKQLYPDHRTTEITAFIKKAAEYLENMQTRDGSWYGNWGICFTYGTWFALAGLAAAGKTFNDCEAIRKGVQFLLAAQKDNGGWGESYLSCSKKIYIAQVGEISNVVQTAWALMGLIHSGQAERDPIPLHRAAKLIINSQLESGDFPQQQATGVFLKNCTLHYAAYRNIHPLWALAEYRARVSLP</sequence>
<keyword id="KW-0413">Isomerase</keyword>
<keyword id="KW-1185">Reference proteome</keyword>
<keyword id="KW-0677">Repeat</keyword>
<name>LUP4_ARATH</name>
<gene>
    <name evidence="6" type="primary">BAS</name>
    <name evidence="5" type="synonym">LUP4</name>
    <name evidence="8" type="ordered locus">At1g78950</name>
    <name evidence="9" type="ORF">YUP8H12R.44</name>
</gene>
<reference key="1">
    <citation type="journal article" date="2009" name="Plant Physiol. Biochem.">
        <title>Identification of a product specific beta-amyrin synthase from Arabidopsis thaliana.</title>
        <authorList>
            <person name="Shibuya M."/>
            <person name="Katsube Y."/>
            <person name="Otsuka M."/>
            <person name="Zhang H."/>
            <person name="Tansakul P."/>
            <person name="Xiang T."/>
            <person name="Ebizuka Y."/>
        </authorList>
    </citation>
    <scope>NUCLEOTIDE SEQUENCE [MRNA]</scope>
    <scope>FUNCTION</scope>
</reference>
<reference key="2">
    <citation type="journal article" date="2000" name="Nature">
        <title>Sequence and analysis of chromosome 1 of the plant Arabidopsis thaliana.</title>
        <authorList>
            <person name="Theologis A."/>
            <person name="Ecker J.R."/>
            <person name="Palm C.J."/>
            <person name="Federspiel N.A."/>
            <person name="Kaul S."/>
            <person name="White O."/>
            <person name="Alonso J."/>
            <person name="Altafi H."/>
            <person name="Araujo R."/>
            <person name="Bowman C.L."/>
            <person name="Brooks S.Y."/>
            <person name="Buehler E."/>
            <person name="Chan A."/>
            <person name="Chao Q."/>
            <person name="Chen H."/>
            <person name="Cheuk R.F."/>
            <person name="Chin C.W."/>
            <person name="Chung M.K."/>
            <person name="Conn L."/>
            <person name="Conway A.B."/>
            <person name="Conway A.R."/>
            <person name="Creasy T.H."/>
            <person name="Dewar K."/>
            <person name="Dunn P."/>
            <person name="Etgu P."/>
            <person name="Feldblyum T.V."/>
            <person name="Feng J.-D."/>
            <person name="Fong B."/>
            <person name="Fujii C.Y."/>
            <person name="Gill J.E."/>
            <person name="Goldsmith A.D."/>
            <person name="Haas B."/>
            <person name="Hansen N.F."/>
            <person name="Hughes B."/>
            <person name="Huizar L."/>
            <person name="Hunter J.L."/>
            <person name="Jenkins J."/>
            <person name="Johnson-Hopson C."/>
            <person name="Khan S."/>
            <person name="Khaykin E."/>
            <person name="Kim C.J."/>
            <person name="Koo H.L."/>
            <person name="Kremenetskaia I."/>
            <person name="Kurtz D.B."/>
            <person name="Kwan A."/>
            <person name="Lam B."/>
            <person name="Langin-Hooper S."/>
            <person name="Lee A."/>
            <person name="Lee J.M."/>
            <person name="Lenz C.A."/>
            <person name="Li J.H."/>
            <person name="Li Y.-P."/>
            <person name="Lin X."/>
            <person name="Liu S.X."/>
            <person name="Liu Z.A."/>
            <person name="Luros J.S."/>
            <person name="Maiti R."/>
            <person name="Marziali A."/>
            <person name="Militscher J."/>
            <person name="Miranda M."/>
            <person name="Nguyen M."/>
            <person name="Nierman W.C."/>
            <person name="Osborne B.I."/>
            <person name="Pai G."/>
            <person name="Peterson J."/>
            <person name="Pham P.K."/>
            <person name="Rizzo M."/>
            <person name="Rooney T."/>
            <person name="Rowley D."/>
            <person name="Sakano H."/>
            <person name="Salzberg S.L."/>
            <person name="Schwartz J.R."/>
            <person name="Shinn P."/>
            <person name="Southwick A.M."/>
            <person name="Sun H."/>
            <person name="Tallon L.J."/>
            <person name="Tambunga G."/>
            <person name="Toriumi M.J."/>
            <person name="Town C.D."/>
            <person name="Utterback T."/>
            <person name="Van Aken S."/>
            <person name="Vaysberg M."/>
            <person name="Vysotskaia V.S."/>
            <person name="Walker M."/>
            <person name="Wu D."/>
            <person name="Yu G."/>
            <person name="Fraser C.M."/>
            <person name="Venter J.C."/>
            <person name="Davis R.W."/>
        </authorList>
    </citation>
    <scope>NUCLEOTIDE SEQUENCE [LARGE SCALE GENOMIC DNA]</scope>
    <source>
        <strain>cv. Columbia</strain>
    </source>
</reference>
<reference key="3">
    <citation type="journal article" date="2017" name="Plant J.">
        <title>Araport11: a complete reannotation of the Arabidopsis thaliana reference genome.</title>
        <authorList>
            <person name="Cheng C.Y."/>
            <person name="Krishnakumar V."/>
            <person name="Chan A.P."/>
            <person name="Thibaud-Nissen F."/>
            <person name="Schobel S."/>
            <person name="Town C.D."/>
        </authorList>
    </citation>
    <scope>GENOME REANNOTATION</scope>
    <source>
        <strain>cv. Columbia</strain>
    </source>
</reference>
<reference key="4">
    <citation type="journal article" date="2001" name="Plant Mol. Biol.">
        <title>Molecular cloning and expression in yeast of 2,3-oxidosqualene-triterpenoid cyclases from Arabidopsis thaliana.</title>
        <authorList>
            <person name="Husselstein-Muller T."/>
            <person name="Schaller H."/>
            <person name="Benveniste P."/>
        </authorList>
    </citation>
    <scope>IDENTIFICATION</scope>
    <scope>CATALYTIC ACTIVITY</scope>
    <scope>NOMENCLATURE</scope>
</reference>
<reference key="5">
    <citation type="journal article" date="2019" name="Microb. Cell Fact.">
        <title>Efficient production of glycyrrhetinic acid in metabolically engineered Saccharomyces cerevisiae via an integrated strategy.</title>
        <authorList>
            <person name="Wang C."/>
            <person name="Su X."/>
            <person name="Sun M."/>
            <person name="Zhang M."/>
            <person name="Wu J."/>
            <person name="Xing J."/>
            <person name="Wang Y."/>
            <person name="Xue J."/>
            <person name="Liu X."/>
            <person name="Sun W."/>
            <person name="Chen S."/>
        </authorList>
    </citation>
    <scope>BIOTECHNOLOGY</scope>
    <scope>REVIEW</scope>
</reference>